<evidence type="ECO:0000255" key="1">
    <source>
        <dbReference type="HAMAP-Rule" id="MF_01363"/>
    </source>
</evidence>
<evidence type="ECO:0000305" key="2"/>
<protein>
    <recommendedName>
        <fullName evidence="1">Large ribosomal subunit protein bL21</fullName>
    </recommendedName>
    <alternativeName>
        <fullName evidence="2">50S ribosomal protein L21</fullName>
    </alternativeName>
</protein>
<accession>A1VK92</accession>
<dbReference type="EMBL" id="CP000529">
    <property type="protein sequence ID" value="ABM36070.1"/>
    <property type="molecule type" value="Genomic_DNA"/>
</dbReference>
<dbReference type="RefSeq" id="WP_011800165.1">
    <property type="nucleotide sequence ID" value="NC_008781.1"/>
</dbReference>
<dbReference type="SMR" id="A1VK92"/>
<dbReference type="STRING" id="365044.Pnap_0751"/>
<dbReference type="KEGG" id="pna:Pnap_0751"/>
<dbReference type="eggNOG" id="COG0261">
    <property type="taxonomic scope" value="Bacteria"/>
</dbReference>
<dbReference type="HOGENOM" id="CLU_061463_3_2_4"/>
<dbReference type="OrthoDB" id="9813334at2"/>
<dbReference type="Proteomes" id="UP000000644">
    <property type="component" value="Chromosome"/>
</dbReference>
<dbReference type="GO" id="GO:0005737">
    <property type="term" value="C:cytoplasm"/>
    <property type="evidence" value="ECO:0007669"/>
    <property type="project" value="UniProtKB-ARBA"/>
</dbReference>
<dbReference type="GO" id="GO:1990904">
    <property type="term" value="C:ribonucleoprotein complex"/>
    <property type="evidence" value="ECO:0007669"/>
    <property type="project" value="UniProtKB-KW"/>
</dbReference>
<dbReference type="GO" id="GO:0005840">
    <property type="term" value="C:ribosome"/>
    <property type="evidence" value="ECO:0007669"/>
    <property type="project" value="UniProtKB-KW"/>
</dbReference>
<dbReference type="GO" id="GO:0019843">
    <property type="term" value="F:rRNA binding"/>
    <property type="evidence" value="ECO:0007669"/>
    <property type="project" value="UniProtKB-UniRule"/>
</dbReference>
<dbReference type="GO" id="GO:0003735">
    <property type="term" value="F:structural constituent of ribosome"/>
    <property type="evidence" value="ECO:0007669"/>
    <property type="project" value="InterPro"/>
</dbReference>
<dbReference type="GO" id="GO:0006412">
    <property type="term" value="P:translation"/>
    <property type="evidence" value="ECO:0007669"/>
    <property type="project" value="UniProtKB-UniRule"/>
</dbReference>
<dbReference type="HAMAP" id="MF_01363">
    <property type="entry name" value="Ribosomal_bL21"/>
    <property type="match status" value="1"/>
</dbReference>
<dbReference type="InterPro" id="IPR028909">
    <property type="entry name" value="bL21-like"/>
</dbReference>
<dbReference type="InterPro" id="IPR036164">
    <property type="entry name" value="bL21-like_sf"/>
</dbReference>
<dbReference type="InterPro" id="IPR001787">
    <property type="entry name" value="Ribosomal_bL21"/>
</dbReference>
<dbReference type="InterPro" id="IPR018258">
    <property type="entry name" value="Ribosomal_bL21_CS"/>
</dbReference>
<dbReference type="NCBIfam" id="TIGR00061">
    <property type="entry name" value="L21"/>
    <property type="match status" value="1"/>
</dbReference>
<dbReference type="PANTHER" id="PTHR21349">
    <property type="entry name" value="50S RIBOSOMAL PROTEIN L21"/>
    <property type="match status" value="1"/>
</dbReference>
<dbReference type="PANTHER" id="PTHR21349:SF0">
    <property type="entry name" value="LARGE RIBOSOMAL SUBUNIT PROTEIN BL21M"/>
    <property type="match status" value="1"/>
</dbReference>
<dbReference type="Pfam" id="PF00829">
    <property type="entry name" value="Ribosomal_L21p"/>
    <property type="match status" value="1"/>
</dbReference>
<dbReference type="SUPFAM" id="SSF141091">
    <property type="entry name" value="L21p-like"/>
    <property type="match status" value="1"/>
</dbReference>
<dbReference type="PROSITE" id="PS01169">
    <property type="entry name" value="RIBOSOMAL_L21"/>
    <property type="match status" value="1"/>
</dbReference>
<reference key="1">
    <citation type="journal article" date="2009" name="Environ. Microbiol.">
        <title>The genome of Polaromonas naphthalenivorans strain CJ2, isolated from coal tar-contaminated sediment, reveals physiological and metabolic versatility and evolution through extensive horizontal gene transfer.</title>
        <authorList>
            <person name="Yagi J.M."/>
            <person name="Sims D."/>
            <person name="Brettin T."/>
            <person name="Bruce D."/>
            <person name="Madsen E.L."/>
        </authorList>
    </citation>
    <scope>NUCLEOTIDE SEQUENCE [LARGE SCALE GENOMIC DNA]</scope>
    <source>
        <strain>CJ2</strain>
    </source>
</reference>
<gene>
    <name evidence="1" type="primary">rplU</name>
    <name type="ordered locus">Pnap_0751</name>
</gene>
<comment type="function">
    <text evidence="1">This protein binds to 23S rRNA in the presence of protein L20.</text>
</comment>
<comment type="subunit">
    <text evidence="1">Part of the 50S ribosomal subunit. Contacts protein L20.</text>
</comment>
<comment type="similarity">
    <text evidence="1">Belongs to the bacterial ribosomal protein bL21 family.</text>
</comment>
<name>RL21_POLNA</name>
<proteinExistence type="inferred from homology"/>
<keyword id="KW-1185">Reference proteome</keyword>
<keyword id="KW-0687">Ribonucleoprotein</keyword>
<keyword id="KW-0689">Ribosomal protein</keyword>
<keyword id="KW-0694">RNA-binding</keyword>
<keyword id="KW-0699">rRNA-binding</keyword>
<organism>
    <name type="scientific">Polaromonas naphthalenivorans (strain CJ2)</name>
    <dbReference type="NCBI Taxonomy" id="365044"/>
    <lineage>
        <taxon>Bacteria</taxon>
        <taxon>Pseudomonadati</taxon>
        <taxon>Pseudomonadota</taxon>
        <taxon>Betaproteobacteria</taxon>
        <taxon>Burkholderiales</taxon>
        <taxon>Comamonadaceae</taxon>
        <taxon>Polaromonas</taxon>
    </lineage>
</organism>
<sequence>MYAVIKTGGKQYKVAAGEKIKVEQIAADVGQEIVIDQVLAVGEGSSIKVGTPLVSGATVTVTVLSHGRHDKVRIFKMRRRKHYQKRQGHRQNFTELQIGAIVG</sequence>
<feature type="chain" id="PRO_1000067870" description="Large ribosomal subunit protein bL21">
    <location>
        <begin position="1"/>
        <end position="103"/>
    </location>
</feature>